<keyword id="KW-0156">Chromatin regulator</keyword>
<keyword id="KW-0158">Chromosome</keyword>
<keyword id="KW-0489">Methyltransferase</keyword>
<keyword id="KW-0539">Nucleus</keyword>
<keyword id="KW-1185">Reference proteome</keyword>
<keyword id="KW-0678">Repressor</keyword>
<keyword id="KW-0949">S-adenosyl-L-methionine</keyword>
<keyword id="KW-0804">Transcription</keyword>
<keyword id="KW-0805">Transcription regulation</keyword>
<keyword id="KW-0808">Transferase</keyword>
<proteinExistence type="inferred from homology"/>
<evidence type="ECO:0000250" key="1">
    <source>
        <dbReference type="UniProtKB" id="Q09265"/>
    </source>
</evidence>
<evidence type="ECO:0000255" key="2">
    <source>
        <dbReference type="PROSITE-ProRule" id="PRU00190"/>
    </source>
</evidence>
<evidence type="ECO:0000255" key="3">
    <source>
        <dbReference type="PROSITE-ProRule" id="PRU00903"/>
    </source>
</evidence>
<evidence type="ECO:0000256" key="4">
    <source>
        <dbReference type="SAM" id="MobiDB-lite"/>
    </source>
</evidence>
<evidence type="ECO:0000312" key="5">
    <source>
        <dbReference type="EMBL" id="CAP23921.1"/>
    </source>
</evidence>
<organism>
    <name type="scientific">Caenorhabditis briggsae</name>
    <dbReference type="NCBI Taxonomy" id="6238"/>
    <lineage>
        <taxon>Eukaryota</taxon>
        <taxon>Metazoa</taxon>
        <taxon>Ecdysozoa</taxon>
        <taxon>Nematoda</taxon>
        <taxon>Chromadorea</taxon>
        <taxon>Rhabditida</taxon>
        <taxon>Rhabditina</taxon>
        <taxon>Rhabditomorpha</taxon>
        <taxon>Rhabditoidea</taxon>
        <taxon>Rhabditidae</taxon>
        <taxon>Peloderinae</taxon>
        <taxon>Caenorhabditis</taxon>
    </lineage>
</organism>
<protein>
    <recommendedName>
        <fullName evidence="1">Histone-lysine N-methyltransferase Suv4-20</fullName>
        <ecNumber evidence="1 3">2.1.1.362</ecNumber>
    </recommendedName>
    <alternativeName>
        <fullName evidence="1">SET domain-containing protein 4</fullName>
    </alternativeName>
</protein>
<accession>A8WTV9</accession>
<comment type="function">
    <text evidence="1">Histone methyltransferase that specifically di- and trimethylates 'Lys-20' of histone H4 (H4K20me2/me3). H4 'Lys-20' trimethylation represents a specific tag for epigenetic transcriptional repression. Contributes to dosage compensation of X chromosome-relative to autosome-linked gene expression, possibly by converting H4K20me1 to H4K20m2/me3 on autosomes. Involved in the regulation of growth and body fat metabolism downstream of the TOR complex 2 pathway.</text>
</comment>
<comment type="catalytic activity">
    <reaction evidence="1 3">
        <text>N(6)-methyl-L-lysyl(20)-[histone H4] + S-adenosyl-L-methionine = N(6),N(6)-dimethyl-L-lysyl(20)-[histone H4] + S-adenosyl-L-homocysteine + H(+)</text>
        <dbReference type="Rhea" id="RHEA:60348"/>
        <dbReference type="Rhea" id="RHEA-COMP:15555"/>
        <dbReference type="Rhea" id="RHEA-COMP:15556"/>
        <dbReference type="ChEBI" id="CHEBI:15378"/>
        <dbReference type="ChEBI" id="CHEBI:57856"/>
        <dbReference type="ChEBI" id="CHEBI:59789"/>
        <dbReference type="ChEBI" id="CHEBI:61929"/>
        <dbReference type="ChEBI" id="CHEBI:61976"/>
        <dbReference type="EC" id="2.1.1.362"/>
    </reaction>
</comment>
<comment type="catalytic activity">
    <reaction evidence="1 3">
        <text>N(6),N(6)-dimethyl-L-lysyl(20)-[histone H4] + S-adenosyl-L-methionine = N(6),N(6),N(6)-trimethyl-L-lysyl(20)-[histone H4] + S-adenosyl-L-homocysteine + H(+)</text>
        <dbReference type="Rhea" id="RHEA:61992"/>
        <dbReference type="Rhea" id="RHEA-COMP:15556"/>
        <dbReference type="Rhea" id="RHEA-COMP:15998"/>
        <dbReference type="ChEBI" id="CHEBI:15378"/>
        <dbReference type="ChEBI" id="CHEBI:57856"/>
        <dbReference type="ChEBI" id="CHEBI:59789"/>
        <dbReference type="ChEBI" id="CHEBI:61961"/>
        <dbReference type="ChEBI" id="CHEBI:61976"/>
    </reaction>
</comment>
<comment type="subcellular location">
    <subcellularLocation>
        <location evidence="1">Nucleus</location>
    </subcellularLocation>
    <subcellularLocation>
        <location evidence="1">Chromosome</location>
    </subcellularLocation>
</comment>
<comment type="similarity">
    <text evidence="3">Belongs to the class V-like SAM-binding methyltransferase superfamily. Histone-lysine methyltransferase family. Suvar4-20 subfamily.</text>
</comment>
<gene>
    <name evidence="5" type="primary">set-4</name>
    <name type="ORF">CBG02629</name>
</gene>
<sequence length="326" mass="37513">MSHAPGEGRPVSSLFPARCNEEVASQNATTMATLNEIELSEIEELSLNFKETPRQDHSMTPVELCYFDDFATTLVVDAVLNFSTHKMCKKRRYLYGDEQRVARELMERFRKDQDWTPAIYGFLNMRSVRSFIEKLAFNKQLEFRDHIIRFLNVFHHDSGYTIQECTRYSLEGNQGAKLVATRAWYRGDKIQRLSGVVCLLSTQDEDTILQPEGSDFSVMYSNRKRCSTLWLGPGAYINHDCRPTCEFVSHGSTAHIRVLRDMVAGDEITCFYGSEFFGPKNMDCECLTCEKTKRGKFSTSDEEENDEPSALSEKRIKYGLRSRSRV</sequence>
<dbReference type="EC" id="2.1.1.362" evidence="1 3"/>
<dbReference type="EMBL" id="HE601438">
    <property type="protein sequence ID" value="CAP23921.1"/>
    <property type="molecule type" value="Genomic_DNA"/>
</dbReference>
<dbReference type="SMR" id="A8WTV9"/>
<dbReference type="FunCoup" id="A8WTV9">
    <property type="interactions" value="913"/>
</dbReference>
<dbReference type="STRING" id="6238.A8WTV9"/>
<dbReference type="KEGG" id="cbr:CBG_02629"/>
<dbReference type="CTD" id="8572421"/>
<dbReference type="WormBase" id="CBG02629">
    <property type="protein sequence ID" value="CBP47083"/>
    <property type="gene ID" value="WBGene00025648"/>
    <property type="gene designation" value="Cbr-set-4"/>
</dbReference>
<dbReference type="eggNOG" id="KOG2589">
    <property type="taxonomic scope" value="Eukaryota"/>
</dbReference>
<dbReference type="HOGENOM" id="CLU_040002_1_1_1"/>
<dbReference type="InParanoid" id="A8WTV9"/>
<dbReference type="OMA" id="THKMNQR"/>
<dbReference type="Proteomes" id="UP000008549">
    <property type="component" value="Unassembled WGS sequence"/>
</dbReference>
<dbReference type="GO" id="GO:0005694">
    <property type="term" value="C:chromosome"/>
    <property type="evidence" value="ECO:0007669"/>
    <property type="project" value="UniProtKB-SubCell"/>
</dbReference>
<dbReference type="GO" id="GO:0005634">
    <property type="term" value="C:nucleus"/>
    <property type="evidence" value="ECO:0007669"/>
    <property type="project" value="UniProtKB-SubCell"/>
</dbReference>
<dbReference type="GO" id="GO:0140941">
    <property type="term" value="F:histone H4K20me methyltransferase activity"/>
    <property type="evidence" value="ECO:0007669"/>
    <property type="project" value="UniProtKB-EC"/>
</dbReference>
<dbReference type="GO" id="GO:0032259">
    <property type="term" value="P:methylation"/>
    <property type="evidence" value="ECO:0007669"/>
    <property type="project" value="UniProtKB-KW"/>
</dbReference>
<dbReference type="CDD" id="cd10524">
    <property type="entry name" value="SET_Suv4-20-like"/>
    <property type="match status" value="1"/>
</dbReference>
<dbReference type="FunFam" id="1.10.10.1700:FF:000001">
    <property type="entry name" value="Histone-lysine N-methyltransferase"/>
    <property type="match status" value="1"/>
</dbReference>
<dbReference type="FunFam" id="2.170.270.10:FF:000006">
    <property type="entry name" value="Histone-lysine N-methyltransferase"/>
    <property type="match status" value="1"/>
</dbReference>
<dbReference type="Gene3D" id="1.10.10.1700">
    <property type="entry name" value="Histone-lysine N-methyltransferase"/>
    <property type="match status" value="1"/>
</dbReference>
<dbReference type="Gene3D" id="2.170.270.10">
    <property type="entry name" value="SET domain"/>
    <property type="match status" value="1"/>
</dbReference>
<dbReference type="InterPro" id="IPR041938">
    <property type="entry name" value="Hist-Lys_N-MTase_N"/>
</dbReference>
<dbReference type="InterPro" id="IPR001214">
    <property type="entry name" value="SET_dom"/>
</dbReference>
<dbReference type="InterPro" id="IPR046341">
    <property type="entry name" value="SET_dom_sf"/>
</dbReference>
<dbReference type="InterPro" id="IPR039977">
    <property type="entry name" value="Suv4-20/Set9"/>
</dbReference>
<dbReference type="InterPro" id="IPR025790">
    <property type="entry name" value="Suv4-20_animal"/>
</dbReference>
<dbReference type="PANTHER" id="PTHR12977:SF4">
    <property type="entry name" value="HISTONE-LYSINE N-METHYLTRANSFERASE KMT5B"/>
    <property type="match status" value="1"/>
</dbReference>
<dbReference type="PANTHER" id="PTHR12977">
    <property type="entry name" value="SUPPRESSOR OF VARIEGATION 4-20-RELATED"/>
    <property type="match status" value="1"/>
</dbReference>
<dbReference type="Pfam" id="PF00856">
    <property type="entry name" value="SET"/>
    <property type="match status" value="1"/>
</dbReference>
<dbReference type="SMART" id="SM00317">
    <property type="entry name" value="SET"/>
    <property type="match status" value="1"/>
</dbReference>
<dbReference type="SUPFAM" id="SSF82199">
    <property type="entry name" value="SET domain"/>
    <property type="match status" value="1"/>
</dbReference>
<dbReference type="PROSITE" id="PS51570">
    <property type="entry name" value="SAM_MT43_SUVAR420_2"/>
    <property type="match status" value="1"/>
</dbReference>
<dbReference type="PROSITE" id="PS50280">
    <property type="entry name" value="SET"/>
    <property type="match status" value="1"/>
</dbReference>
<name>SUV42_CAEBR</name>
<reference evidence="5" key="1">
    <citation type="journal article" date="2003" name="PLoS Biol.">
        <title>The genome sequence of Caenorhabditis briggsae: a platform for comparative genomics.</title>
        <authorList>
            <person name="Stein L.D."/>
            <person name="Bao Z."/>
            <person name="Blasiar D."/>
            <person name="Blumenthal T."/>
            <person name="Brent M.R."/>
            <person name="Chen N."/>
            <person name="Chinwalla A."/>
            <person name="Clarke L."/>
            <person name="Clee C."/>
            <person name="Coghlan A."/>
            <person name="Coulson A."/>
            <person name="D'Eustachio P."/>
            <person name="Fitch D.H.A."/>
            <person name="Fulton L.A."/>
            <person name="Fulton R.E."/>
            <person name="Griffiths-Jones S."/>
            <person name="Harris T.W."/>
            <person name="Hillier L.W."/>
            <person name="Kamath R."/>
            <person name="Kuwabara P.E."/>
            <person name="Mardis E.R."/>
            <person name="Marra M.A."/>
            <person name="Miner T.L."/>
            <person name="Minx P."/>
            <person name="Mullikin J.C."/>
            <person name="Plumb R.W."/>
            <person name="Rogers J."/>
            <person name="Schein J.E."/>
            <person name="Sohrmann M."/>
            <person name="Spieth J."/>
            <person name="Stajich J.E."/>
            <person name="Wei C."/>
            <person name="Willey D."/>
            <person name="Wilson R.K."/>
            <person name="Durbin R.M."/>
            <person name="Waterston R.H."/>
        </authorList>
    </citation>
    <scope>NUCLEOTIDE SEQUENCE [LARGE SCALE GENOMIC DNA]</scope>
    <source>
        <strain evidence="5">AF16</strain>
    </source>
</reference>
<feature type="chain" id="PRO_0000396641" description="Histone-lysine N-methyltransferase Suv4-20">
    <location>
        <begin position="1"/>
        <end position="326"/>
    </location>
</feature>
<feature type="domain" description="SET" evidence="2">
    <location>
        <begin position="163"/>
        <end position="273"/>
    </location>
</feature>
<feature type="region of interest" description="Disordered" evidence="4">
    <location>
        <begin position="294"/>
        <end position="313"/>
    </location>
</feature>